<gene>
    <name type="primary">rhsB</name>
    <name type="ordered locus">b3482</name>
    <name type="ordered locus">JW5679</name>
</gene>
<sequence length="1411" mass="159395">MSGKPAARQGDMTQYGGSIVQGSAGVRIGAPTGVACSVCPGGVTSGHPVNPLLGAKVLPGETDIALPGPLPFILSRTYSSYRTKTPAPVGSLGPGWKMPADIRLQLRDNTLILSDNGGRSLYFEHLFPGEDGYSRSESLWLVRGGVAKLDEGHRLAALWQALPEELRLSPHRYLATNSPQGPWWLLGWCERVPEADEVLPAPLPPYRVLTGLVDRFGRTQTFHREAAGEFSGEITGVTDGAWRHFRLVLTTQAQRAEEARQQAISGGTEPSAFPDTLPGYTEYGRDNGIRLSAVWLTHDPEYPENLPAAPLVRYGWTPRGELAVVYDRSGKQVRSFTYDDKYRGRMVAHRHTGRPEIRYRYDSDGRVTEQLNPAGLSYTYQYEKDRITITDSLDRREVLHTQGEAGLKRVVKKEHADGSVTQSQFDAVGRLRAQTDAAGRTTEYSPDVVTGLITRITTPDGRASAFYYNHHNQLTSATGPDGLELRREYDELGRLIQETAPDGDITRYRYDNPHSDLPCATEDATGSRKTMTWSRYGQLLSFTDCSGYVTRYDHDRFGQMTAVHREEGLSQYRAYDSRGQLIAVKDTQGHETRYEYNIAGDLTAVIAPDGSRNGTQYDAWGKAVRTTQGGLTRSMEYDAAGRVIRLTSENGSHTTFRYDVLDRLIQETGFDGRTQRYHHDLTGKLIRSEDEGLVTHWHYDEADRLTHRTVKGETAERWQYDERGWLTDISHISEGHRVAVHYRYDEKGRLTGERQTVHHPQTEALLWQHETRHAYNAQGLANRCIPDSLPAVEWLTYGSGYLAGMKLGDTPLVEYTRDRLHRETLRSFGRYELTTAYTPAGQLQSQHLNSLLSDRDYTWNDNGELIRISSPRQTRSYSYSTTGRLTGVHTTAANLDIRIPYATDPAGNRLPDPELHPDSTLSMWPDNRIARDAHYLYRYDRHGRLTEKTDLIPEGVIRTDDERTHRYHYDSQHRLVHYTRTQYEEPLVESRYLYDPLGRRVAKRVWRRERDLTGWMSLSRKPQVTWYGWDGDRLTTIQNDRSRIQTIYQPGSFTPLIRVETATGELAKTQRRSLADALQQSGGEDGGSVVFPPVLVQMLDRLESEILADRVSEESRRWLASCGLTVEQMQNQMDPVYTPARKIHLYHCDHRGLPLALISTEGATAWCAEYDEWGNLLNEENPHQLQQLIRLPGQQYDEESGLYYNRHRYYDPLQGRYITQDPIGLKGGWNLYGYQLNPISDIDPLGLSMWEDAKSGACTNGLCGTLSAMIGPDKFDSIDSTAYDALNKINSQSICEDKEFAGLICKDNSGRYFSTAPNRGERKGSYPFNSPCPNGTEKVSAYHTHGADSHGEYWDEIFSGKDEKIVKSKDNNIKSFYLGTPSGNFKAIDNHGKEITNRKGLPNVCRVHGNM</sequence>
<feature type="chain" id="PRO_0000022226" description="Protein RhsB">
    <location>
        <begin position="1"/>
        <end position="1411"/>
    </location>
</feature>
<feature type="repeat" description="1" evidence="2">
    <location>
        <begin position="330"/>
        <end position="352"/>
    </location>
</feature>
<feature type="repeat" description="2" evidence="2">
    <location>
        <begin position="353"/>
        <end position="374"/>
    </location>
</feature>
<feature type="repeat" description="3" evidence="2">
    <location>
        <begin position="375"/>
        <end position="417"/>
    </location>
</feature>
<feature type="repeat" description="4" evidence="2">
    <location>
        <begin position="418"/>
        <end position="438"/>
    </location>
</feature>
<feature type="repeat" description="5" evidence="2">
    <location>
        <begin position="439"/>
        <end position="460"/>
    </location>
</feature>
<feature type="repeat" description="6" evidence="2">
    <location>
        <begin position="461"/>
        <end position="481"/>
    </location>
</feature>
<feature type="repeat" description="7" evidence="2">
    <location>
        <begin position="482"/>
        <end position="502"/>
    </location>
</feature>
<feature type="repeat" description="8" evidence="2">
    <location>
        <begin position="503"/>
        <end position="525"/>
    </location>
</feature>
<feature type="repeat" description="9" evidence="2">
    <location>
        <begin position="526"/>
        <end position="546"/>
    </location>
</feature>
<feature type="repeat" description="10" evidence="2">
    <location>
        <begin position="547"/>
        <end position="567"/>
    </location>
</feature>
<feature type="repeat" description="11" evidence="2">
    <location>
        <begin position="568"/>
        <end position="588"/>
    </location>
</feature>
<feature type="repeat" description="12" evidence="2">
    <location>
        <begin position="589"/>
        <end position="609"/>
    </location>
</feature>
<feature type="repeat" description="13" evidence="2">
    <location>
        <begin position="610"/>
        <end position="629"/>
    </location>
</feature>
<feature type="repeat" description="14" evidence="2">
    <location>
        <begin position="630"/>
        <end position="650"/>
    </location>
</feature>
<feature type="repeat" description="15" evidence="2">
    <location>
        <begin position="651"/>
        <end position="671"/>
    </location>
</feature>
<feature type="repeat" description="16" evidence="2">
    <location>
        <begin position="672"/>
        <end position="691"/>
    </location>
</feature>
<feature type="repeat" description="17" evidence="2">
    <location>
        <begin position="692"/>
        <end position="711"/>
    </location>
</feature>
<feature type="repeat" description="18" evidence="2">
    <location>
        <begin position="712"/>
        <end position="734"/>
    </location>
</feature>
<feature type="repeat" description="19" evidence="2">
    <location>
        <begin position="735"/>
        <end position="758"/>
    </location>
</feature>
<feature type="repeat" description="20" evidence="2">
    <location>
        <begin position="808"/>
        <end position="828"/>
    </location>
</feature>
<feature type="repeat" description="21" evidence="2">
    <location>
        <begin position="829"/>
        <end position="850"/>
    </location>
</feature>
<feature type="repeat" description="22" evidence="2">
    <location>
        <begin position="851"/>
        <end position="871"/>
    </location>
</feature>
<feature type="repeat" description="23" evidence="2">
    <location>
        <begin position="872"/>
        <end position="894"/>
    </location>
</feature>
<feature type="repeat" description="24" evidence="2">
    <location>
        <begin position="895"/>
        <end position="930"/>
    </location>
</feature>
<feature type="repeat" description="25" evidence="2">
    <location>
        <begin position="931"/>
        <end position="959"/>
    </location>
</feature>
<feature type="repeat" description="26" evidence="2">
    <location>
        <begin position="960"/>
        <end position="984"/>
    </location>
</feature>
<feature type="repeat" description="27" evidence="2">
    <location>
        <begin position="985"/>
        <end position="1019"/>
    </location>
</feature>
<feature type="repeat" description="28" evidence="2">
    <location>
        <begin position="1162"/>
        <end position="1186"/>
    </location>
</feature>
<feature type="region of interest" description="28 X approximate tandem repeats" evidence="2">
    <location>
        <begin position="330"/>
        <end position="1186"/>
    </location>
</feature>
<reference key="1">
    <citation type="journal article" date="1993" name="J. Bacteriol.">
        <title>Rhs elements of Escherichia coli K-12: complex composites of shared and unique components that have different evolutionary histories.</title>
        <authorList>
            <person name="Zhao S."/>
            <person name="Sandt C.H."/>
            <person name="Feulner G."/>
            <person name="Vlazny D.A."/>
            <person name="Gray J.A."/>
            <person name="Hill C.W."/>
        </authorList>
    </citation>
    <scope>NUCLEOTIDE SEQUENCE [GENOMIC DNA]</scope>
    <source>
        <strain>K12</strain>
    </source>
</reference>
<reference key="2">
    <citation type="submission" date="1997-01" db="EMBL/GenBank/DDBJ databases">
        <authorList>
            <person name="Hill C.W."/>
        </authorList>
    </citation>
    <scope>SEQUENCE REVISION TO 405</scope>
</reference>
<reference key="3">
    <citation type="journal article" date="1994" name="Nucleic Acids Res.">
        <title>Analysis of the Escherichia coli genome. V. DNA sequence of the region from 76.0 to 81.5 minutes.</title>
        <authorList>
            <person name="Sofia H.J."/>
            <person name="Burland V."/>
            <person name="Daniels D.L."/>
            <person name="Plunkett G. III"/>
            <person name="Blattner F.R."/>
        </authorList>
    </citation>
    <scope>NUCLEOTIDE SEQUENCE [LARGE SCALE GENOMIC DNA]</scope>
    <source>
        <strain>K12 / MG1655 / ATCC 47076</strain>
    </source>
</reference>
<reference key="4">
    <citation type="journal article" date="1997" name="Science">
        <title>The complete genome sequence of Escherichia coli K-12.</title>
        <authorList>
            <person name="Blattner F.R."/>
            <person name="Plunkett G. III"/>
            <person name="Bloch C.A."/>
            <person name="Perna N.T."/>
            <person name="Burland V."/>
            <person name="Riley M."/>
            <person name="Collado-Vides J."/>
            <person name="Glasner J.D."/>
            <person name="Rode C.K."/>
            <person name="Mayhew G.F."/>
            <person name="Gregor J."/>
            <person name="Davis N.W."/>
            <person name="Kirkpatrick H.A."/>
            <person name="Goeden M.A."/>
            <person name="Rose D.J."/>
            <person name="Mau B."/>
            <person name="Shao Y."/>
        </authorList>
    </citation>
    <scope>NUCLEOTIDE SEQUENCE [LARGE SCALE GENOMIC DNA]</scope>
    <source>
        <strain>K12 / MG1655 / ATCC 47076</strain>
    </source>
</reference>
<reference key="5">
    <citation type="journal article" date="2006" name="Nucleic Acids Res.">
        <title>Escherichia coli K-12: a cooperatively developed annotation snapshot -- 2005.</title>
        <authorList>
            <person name="Riley M."/>
            <person name="Abe T."/>
            <person name="Arnaud M.B."/>
            <person name="Berlyn M.K.B."/>
            <person name="Blattner F.R."/>
            <person name="Chaudhuri R.R."/>
            <person name="Glasner J.D."/>
            <person name="Horiuchi T."/>
            <person name="Keseler I.M."/>
            <person name="Kosuge T."/>
            <person name="Mori H."/>
            <person name="Perna N.T."/>
            <person name="Plunkett G. III"/>
            <person name="Rudd K.E."/>
            <person name="Serres M.H."/>
            <person name="Thomas G.H."/>
            <person name="Thomson N.R."/>
            <person name="Wishart D."/>
            <person name="Wanner B.L."/>
        </authorList>
    </citation>
    <scope>SEQUENCE REVISION TO 1130</scope>
</reference>
<reference key="6">
    <citation type="journal article" date="2006" name="Mol. Syst. Biol.">
        <title>Highly accurate genome sequences of Escherichia coli K-12 strains MG1655 and W3110.</title>
        <authorList>
            <person name="Hayashi K."/>
            <person name="Morooka N."/>
            <person name="Yamamoto Y."/>
            <person name="Fujita K."/>
            <person name="Isono K."/>
            <person name="Choi S."/>
            <person name="Ohtsubo E."/>
            <person name="Baba T."/>
            <person name="Wanner B.L."/>
            <person name="Mori H."/>
            <person name="Horiuchi T."/>
        </authorList>
    </citation>
    <scope>NUCLEOTIDE SEQUENCE [LARGE SCALE GENOMIC DNA]</scope>
    <source>
        <strain>K12 / W3110 / ATCC 27325 / DSM 5911</strain>
    </source>
</reference>
<reference key="7">
    <citation type="journal article" date="1989" name="J. Bacteriol.">
        <title>rhs gene family of Escherichia coli K-12.</title>
        <authorList>
            <person name="Sadosky A.B."/>
            <person name="Davidson A."/>
            <person name="Lin R.J."/>
            <person name="Hill C.W."/>
        </authorList>
    </citation>
    <scope>NUCLEOTIDE SEQUENCE [GENOMIC DNA] OF 1-100</scope>
    <source>
        <strain>K12</strain>
    </source>
</reference>
<reference key="8">
    <citation type="journal article" date="1990" name="J. Bacteriol.">
        <title>Structure of the rhsA locus from Escherichia coli K-12 and comparison of rhsA with other members of the rhs multigene family.</title>
        <authorList>
            <person name="Feulner G."/>
            <person name="Gray J.A."/>
            <person name="Kirschman J.A."/>
            <person name="Lehner A.F."/>
            <person name="Sadosky A.B."/>
            <person name="Vlazny D.A."/>
            <person name="Zhang J."/>
            <person name="Zhao S."/>
            <person name="Hill C.W."/>
        </authorList>
    </citation>
    <scope>NUCLEOTIDE SEQUENCE [GENOMIC DNA] OF 1221-1411</scope>
    <source>
        <strain>K12</strain>
    </source>
</reference>
<reference key="9">
    <citation type="journal article" date="1994" name="Mol. Microbiol.">
        <title>Rhs elements of Escherichia coli: a family of genetic composites each encoding a large mosaic protein.</title>
        <authorList>
            <person name="Hill C.W."/>
            <person name="Sandt C.H."/>
            <person name="Vlazny D.A."/>
        </authorList>
    </citation>
    <scope>REVIEW</scope>
</reference>
<name>RHSB_ECOLI</name>
<proteinExistence type="inferred from homology"/>
<comment type="function">
    <text>Rhs elements have a nonessential function. They may play an important role in the natural ecology of the cell.</text>
</comment>
<comment type="domain">
    <text>Each rhs appears to consist of a highly conserved 141 kDa amino fragment followed by a highly divergent C-terminus.</text>
</comment>
<comment type="similarity">
    <text evidence="1">Belongs to the RHS family.</text>
</comment>
<accession>P16917</accession>
<accession>P76701</accession>
<accession>Q2M7E5</accession>
<protein>
    <recommendedName>
        <fullName>Protein RhsB</fullName>
    </recommendedName>
</protein>
<organism>
    <name type="scientific">Escherichia coli (strain K12)</name>
    <dbReference type="NCBI Taxonomy" id="83333"/>
    <lineage>
        <taxon>Bacteria</taxon>
        <taxon>Pseudomonadati</taxon>
        <taxon>Pseudomonadota</taxon>
        <taxon>Gammaproteobacteria</taxon>
        <taxon>Enterobacterales</taxon>
        <taxon>Enterobacteriaceae</taxon>
        <taxon>Escherichia</taxon>
    </lineage>
</organism>
<evidence type="ECO:0000305" key="1"/>
<evidence type="ECO:0000305" key="2">
    <source>
    </source>
</evidence>
<dbReference type="EMBL" id="L02370">
    <property type="protein sequence ID" value="AAC61883.1"/>
    <property type="molecule type" value="Genomic_DNA"/>
</dbReference>
<dbReference type="EMBL" id="U00039">
    <property type="protein sequence ID" value="AAB18457.1"/>
    <property type="molecule type" value="Genomic_DNA"/>
</dbReference>
<dbReference type="EMBL" id="U00096">
    <property type="protein sequence ID" value="AAT48186.1"/>
    <property type="molecule type" value="Genomic_DNA"/>
</dbReference>
<dbReference type="EMBL" id="AP009048">
    <property type="protein sequence ID" value="BAE77811.1"/>
    <property type="molecule type" value="Genomic_DNA"/>
</dbReference>
<dbReference type="PIR" id="E65145">
    <property type="entry name" value="E65145"/>
</dbReference>
<dbReference type="RefSeq" id="WP_000015298.1">
    <property type="nucleotide sequence ID" value="NZ_LN832404.1"/>
</dbReference>
<dbReference type="RefSeq" id="YP_026224.1">
    <property type="nucleotide sequence ID" value="NC_000913.3"/>
</dbReference>
<dbReference type="SMR" id="P16917"/>
<dbReference type="BioGRID" id="4262510">
    <property type="interactions" value="32"/>
</dbReference>
<dbReference type="DIP" id="DIP-10700N"/>
<dbReference type="FunCoup" id="P16917">
    <property type="interactions" value="13"/>
</dbReference>
<dbReference type="IntAct" id="P16917">
    <property type="interactions" value="1"/>
</dbReference>
<dbReference type="STRING" id="511145.b3482"/>
<dbReference type="PaxDb" id="511145-b3482"/>
<dbReference type="EnsemblBacteria" id="AAT48186">
    <property type="protein sequence ID" value="AAT48186"/>
    <property type="gene ID" value="b3482"/>
</dbReference>
<dbReference type="GeneID" id="947994"/>
<dbReference type="KEGG" id="ecj:JW5679"/>
<dbReference type="KEGG" id="eco:b3482"/>
<dbReference type="KEGG" id="ecoc:C3026_18855"/>
<dbReference type="PATRIC" id="fig|1411691.4.peg.3243"/>
<dbReference type="EchoBASE" id="EB0840"/>
<dbReference type="eggNOG" id="COG3209">
    <property type="taxonomic scope" value="Bacteria"/>
</dbReference>
<dbReference type="HOGENOM" id="CLU_001218_0_1_6"/>
<dbReference type="InParanoid" id="P16917"/>
<dbReference type="OMA" id="MTGPDKF"/>
<dbReference type="OrthoDB" id="6043530at2"/>
<dbReference type="PhylomeDB" id="P16917"/>
<dbReference type="BioCyc" id="EcoCyc:EG10847-MONOMER"/>
<dbReference type="PRO" id="PR:P16917"/>
<dbReference type="Proteomes" id="UP000000625">
    <property type="component" value="Chromosome"/>
</dbReference>
<dbReference type="Gene3D" id="3.90.930.1">
    <property type="match status" value="1"/>
</dbReference>
<dbReference type="Gene3D" id="2.180.10.10">
    <property type="entry name" value="RHS repeat-associated core"/>
    <property type="match status" value="2"/>
</dbReference>
<dbReference type="InterPro" id="IPR025479">
    <property type="entry name" value="DUF4329"/>
</dbReference>
<dbReference type="InterPro" id="IPR045351">
    <property type="entry name" value="DUF6531"/>
</dbReference>
<dbReference type="InterPro" id="IPR001826">
    <property type="entry name" value="RHS"/>
</dbReference>
<dbReference type="InterPro" id="IPR022385">
    <property type="entry name" value="Rhs_assc_core"/>
</dbReference>
<dbReference type="InterPro" id="IPR053422">
    <property type="entry name" value="RHS_domain"/>
</dbReference>
<dbReference type="InterPro" id="IPR031325">
    <property type="entry name" value="RHS_repeat"/>
</dbReference>
<dbReference type="InterPro" id="IPR050708">
    <property type="entry name" value="T6SS_VgrG/RHS"/>
</dbReference>
<dbReference type="InterPro" id="IPR006530">
    <property type="entry name" value="YD"/>
</dbReference>
<dbReference type="NCBIfam" id="TIGR03696">
    <property type="entry name" value="Rhs_assc_core"/>
    <property type="match status" value="1"/>
</dbReference>
<dbReference type="NCBIfam" id="NF041261">
    <property type="entry name" value="RHS_core"/>
    <property type="match status" value="1"/>
</dbReference>
<dbReference type="NCBIfam" id="TIGR01643">
    <property type="entry name" value="YD_repeat_2x"/>
    <property type="match status" value="5"/>
</dbReference>
<dbReference type="PANTHER" id="PTHR32305">
    <property type="match status" value="1"/>
</dbReference>
<dbReference type="PANTHER" id="PTHR32305:SF15">
    <property type="entry name" value="PROTEIN RHSA-RELATED"/>
    <property type="match status" value="1"/>
</dbReference>
<dbReference type="Pfam" id="PF14220">
    <property type="entry name" value="DUF4329"/>
    <property type="match status" value="1"/>
</dbReference>
<dbReference type="Pfam" id="PF20148">
    <property type="entry name" value="DUF6531"/>
    <property type="match status" value="1"/>
</dbReference>
<dbReference type="Pfam" id="PF03527">
    <property type="entry name" value="RHS"/>
    <property type="match status" value="1"/>
</dbReference>
<dbReference type="Pfam" id="PF05593">
    <property type="entry name" value="RHS_repeat"/>
    <property type="match status" value="6"/>
</dbReference>
<dbReference type="PRINTS" id="PR00394">
    <property type="entry name" value="RHSPROTEIN"/>
</dbReference>
<keyword id="KW-1185">Reference proteome</keyword>
<keyword id="KW-0677">Repeat</keyword>